<proteinExistence type="inferred from homology"/>
<gene>
    <name evidence="1" type="primary">ybeY</name>
    <name type="ordered locus">UPA3_0508</name>
</gene>
<accession>B1AJD0</accession>
<feature type="chain" id="PRO_1000073924" description="Endoribonuclease YbeY">
    <location>
        <begin position="1"/>
        <end position="155"/>
    </location>
</feature>
<feature type="binding site" evidence="1">
    <location>
        <position position="113"/>
    </location>
    <ligand>
        <name>Zn(2+)</name>
        <dbReference type="ChEBI" id="CHEBI:29105"/>
        <note>catalytic</note>
    </ligand>
</feature>
<feature type="binding site" evidence="1">
    <location>
        <position position="117"/>
    </location>
    <ligand>
        <name>Zn(2+)</name>
        <dbReference type="ChEBI" id="CHEBI:29105"/>
        <note>catalytic</note>
    </ligand>
</feature>
<feature type="binding site" evidence="1">
    <location>
        <position position="123"/>
    </location>
    <ligand>
        <name>Zn(2+)</name>
        <dbReference type="ChEBI" id="CHEBI:29105"/>
        <note>catalytic</note>
    </ligand>
</feature>
<evidence type="ECO:0000255" key="1">
    <source>
        <dbReference type="HAMAP-Rule" id="MF_00009"/>
    </source>
</evidence>
<comment type="function">
    <text evidence="1">Single strand-specific metallo-endoribonuclease involved in late-stage 70S ribosome quality control and in maturation of the 3' terminus of the 16S rRNA.</text>
</comment>
<comment type="cofactor">
    <cofactor evidence="1">
        <name>Zn(2+)</name>
        <dbReference type="ChEBI" id="CHEBI:29105"/>
    </cofactor>
    <text evidence="1">Binds 1 zinc ion.</text>
</comment>
<comment type="subcellular location">
    <subcellularLocation>
        <location evidence="1">Cytoplasm</location>
    </subcellularLocation>
</comment>
<comment type="similarity">
    <text evidence="1">Belongs to the endoribonuclease YbeY family.</text>
</comment>
<name>YBEY_UREP2</name>
<sequence length="155" mass="18449">MHFLITNEVKKIFNDKLYSQRFKQITDLVSTKLNIDKKRFFECHFVDEKTIQEINKNYRNKDYITDVISFAFDDGEIITPLLGEMYICYQKVVDQASQFAHSFERELCFLFTHGLLHLLGYDHIKIEDEKIMFALQDEILNELKITRNINGARND</sequence>
<organism>
    <name type="scientific">Ureaplasma parvum serovar 3 (strain ATCC 27815 / 27 / NCTC 11736)</name>
    <dbReference type="NCBI Taxonomy" id="505682"/>
    <lineage>
        <taxon>Bacteria</taxon>
        <taxon>Bacillati</taxon>
        <taxon>Mycoplasmatota</taxon>
        <taxon>Mycoplasmoidales</taxon>
        <taxon>Mycoplasmoidaceae</taxon>
        <taxon>Ureaplasma</taxon>
    </lineage>
</organism>
<reference key="1">
    <citation type="submission" date="2008-02" db="EMBL/GenBank/DDBJ databases">
        <title>Genome sequence of Ureaplasma parvum serovar 3.</title>
        <authorList>
            <person name="Methe B.A."/>
            <person name="Glass J."/>
            <person name="Waites K."/>
            <person name="Shrivastava S."/>
        </authorList>
    </citation>
    <scope>NUCLEOTIDE SEQUENCE [LARGE SCALE GENOMIC DNA]</scope>
    <source>
        <strain>ATCC 27815 / 27 / NCTC 11736</strain>
    </source>
</reference>
<protein>
    <recommendedName>
        <fullName evidence="1">Endoribonuclease YbeY</fullName>
        <ecNumber evidence="1">3.1.-.-</ecNumber>
    </recommendedName>
</protein>
<dbReference type="EC" id="3.1.-.-" evidence="1"/>
<dbReference type="EMBL" id="CP000942">
    <property type="protein sequence ID" value="ACA32849.1"/>
    <property type="molecule type" value="Genomic_DNA"/>
</dbReference>
<dbReference type="RefSeq" id="WP_006688705.1">
    <property type="nucleotide sequence ID" value="NC_010503.1"/>
</dbReference>
<dbReference type="SMR" id="B1AJD0"/>
<dbReference type="GeneID" id="29672373"/>
<dbReference type="KEGG" id="upa:UPA3_0508"/>
<dbReference type="HOGENOM" id="CLU_106710_3_0_14"/>
<dbReference type="Proteomes" id="UP000002162">
    <property type="component" value="Chromosome"/>
</dbReference>
<dbReference type="GO" id="GO:0005737">
    <property type="term" value="C:cytoplasm"/>
    <property type="evidence" value="ECO:0007669"/>
    <property type="project" value="UniProtKB-SubCell"/>
</dbReference>
<dbReference type="GO" id="GO:0004222">
    <property type="term" value="F:metalloendopeptidase activity"/>
    <property type="evidence" value="ECO:0007669"/>
    <property type="project" value="InterPro"/>
</dbReference>
<dbReference type="GO" id="GO:0004521">
    <property type="term" value="F:RNA endonuclease activity"/>
    <property type="evidence" value="ECO:0007669"/>
    <property type="project" value="UniProtKB-UniRule"/>
</dbReference>
<dbReference type="GO" id="GO:0008270">
    <property type="term" value="F:zinc ion binding"/>
    <property type="evidence" value="ECO:0007669"/>
    <property type="project" value="UniProtKB-UniRule"/>
</dbReference>
<dbReference type="GO" id="GO:0006364">
    <property type="term" value="P:rRNA processing"/>
    <property type="evidence" value="ECO:0007669"/>
    <property type="project" value="UniProtKB-UniRule"/>
</dbReference>
<dbReference type="Gene3D" id="3.40.390.30">
    <property type="entry name" value="Metalloproteases ('zincins'), catalytic domain"/>
    <property type="match status" value="1"/>
</dbReference>
<dbReference type="HAMAP" id="MF_00009">
    <property type="entry name" value="Endoribonucl_YbeY"/>
    <property type="match status" value="1"/>
</dbReference>
<dbReference type="InterPro" id="IPR023091">
    <property type="entry name" value="MetalPrtase_cat_dom_sf_prd"/>
</dbReference>
<dbReference type="InterPro" id="IPR002036">
    <property type="entry name" value="YbeY"/>
</dbReference>
<dbReference type="InterPro" id="IPR020549">
    <property type="entry name" value="YbeY_CS"/>
</dbReference>
<dbReference type="NCBIfam" id="TIGR00043">
    <property type="entry name" value="rRNA maturation RNase YbeY"/>
    <property type="match status" value="1"/>
</dbReference>
<dbReference type="PANTHER" id="PTHR46986">
    <property type="entry name" value="ENDORIBONUCLEASE YBEY, CHLOROPLASTIC"/>
    <property type="match status" value="1"/>
</dbReference>
<dbReference type="PANTHER" id="PTHR46986:SF1">
    <property type="entry name" value="ENDORIBONUCLEASE YBEY, CHLOROPLASTIC"/>
    <property type="match status" value="1"/>
</dbReference>
<dbReference type="Pfam" id="PF02130">
    <property type="entry name" value="YbeY"/>
    <property type="match status" value="1"/>
</dbReference>
<dbReference type="SUPFAM" id="SSF55486">
    <property type="entry name" value="Metalloproteases ('zincins'), catalytic domain"/>
    <property type="match status" value="1"/>
</dbReference>
<dbReference type="PROSITE" id="PS01306">
    <property type="entry name" value="UPF0054"/>
    <property type="match status" value="1"/>
</dbReference>
<keyword id="KW-0963">Cytoplasm</keyword>
<keyword id="KW-0255">Endonuclease</keyword>
<keyword id="KW-0378">Hydrolase</keyword>
<keyword id="KW-0479">Metal-binding</keyword>
<keyword id="KW-0540">Nuclease</keyword>
<keyword id="KW-0690">Ribosome biogenesis</keyword>
<keyword id="KW-0698">rRNA processing</keyword>
<keyword id="KW-0862">Zinc</keyword>